<accession>A3PL98</accession>
<sequence length="430" mass="46439">MANVVVVGAQWGDEGKGKIVDWLSERADVIARFQGGHNAGHTLVIDGKVYKLSLLPSGIVRPGKLSVIGNGVVLDPWHLVQEIAKLRADGVEISPESLMIAENAVLILPLHGELDRARESQNSVAKIGTTGRGIGPAYEDKVGRRAIRVADLADEATLALRVDRLMVHHDALRRGLGIEPVDREALLTQLREIAPQVLPYAKPVWKVMNEMRKAGKRILFEGAQGALLDIDFGTYPYVTSSNVIAGQAATGTGIGPGAIGFVLGIVKAYTTRVGEGPFPAELQDADGERLGERGREFGTVTGRKRRCGWFDAVLVRQTCATSGVSGIALTKLDVLDGFETLKICVGYELDGERLDHLPIAADQQARCTPIFEELEGWSESTAGARSWADLPGAAVKYVRRIEELIQCPVALLSTSPERDDTILVTDPFED</sequence>
<protein>
    <recommendedName>
        <fullName evidence="1">Adenylosuccinate synthetase</fullName>
        <shortName evidence="1">AMPSase</shortName>
        <shortName evidence="1">AdSS</shortName>
        <ecNumber evidence="1">6.3.4.4</ecNumber>
    </recommendedName>
    <alternativeName>
        <fullName evidence="1">IMP--aspartate ligase</fullName>
    </alternativeName>
</protein>
<reference key="1">
    <citation type="submission" date="2007-02" db="EMBL/GenBank/DDBJ databases">
        <title>Complete sequence of chromosome 1 of Rhodobacter sphaeroides ATCC 17029.</title>
        <authorList>
            <person name="Copeland A."/>
            <person name="Lucas S."/>
            <person name="Lapidus A."/>
            <person name="Barry K."/>
            <person name="Detter J.C."/>
            <person name="Glavina del Rio T."/>
            <person name="Hammon N."/>
            <person name="Israni S."/>
            <person name="Dalin E."/>
            <person name="Tice H."/>
            <person name="Pitluck S."/>
            <person name="Kiss H."/>
            <person name="Brettin T."/>
            <person name="Bruce D."/>
            <person name="Han C."/>
            <person name="Tapia R."/>
            <person name="Gilna P."/>
            <person name="Schmutz J."/>
            <person name="Larimer F."/>
            <person name="Land M."/>
            <person name="Hauser L."/>
            <person name="Kyrpides N."/>
            <person name="Mikhailova N."/>
            <person name="Richardson P."/>
            <person name="Mackenzie C."/>
            <person name="Choudhary M."/>
            <person name="Donohue T.J."/>
            <person name="Kaplan S."/>
        </authorList>
    </citation>
    <scope>NUCLEOTIDE SEQUENCE [LARGE SCALE GENOMIC DNA]</scope>
    <source>
        <strain>ATCC 17029 / ATH 2.4.9</strain>
    </source>
</reference>
<name>PURA_CERS1</name>
<comment type="function">
    <text evidence="1">Plays an important role in the de novo pathway of purine nucleotide biosynthesis. Catalyzes the first committed step in the biosynthesis of AMP from IMP.</text>
</comment>
<comment type="catalytic activity">
    <reaction evidence="1">
        <text>IMP + L-aspartate + GTP = N(6)-(1,2-dicarboxyethyl)-AMP + GDP + phosphate + 2 H(+)</text>
        <dbReference type="Rhea" id="RHEA:15753"/>
        <dbReference type="ChEBI" id="CHEBI:15378"/>
        <dbReference type="ChEBI" id="CHEBI:29991"/>
        <dbReference type="ChEBI" id="CHEBI:37565"/>
        <dbReference type="ChEBI" id="CHEBI:43474"/>
        <dbReference type="ChEBI" id="CHEBI:57567"/>
        <dbReference type="ChEBI" id="CHEBI:58053"/>
        <dbReference type="ChEBI" id="CHEBI:58189"/>
        <dbReference type="EC" id="6.3.4.4"/>
    </reaction>
</comment>
<comment type="cofactor">
    <cofactor evidence="1">
        <name>Mg(2+)</name>
        <dbReference type="ChEBI" id="CHEBI:18420"/>
    </cofactor>
    <text evidence="1">Binds 1 Mg(2+) ion per subunit.</text>
</comment>
<comment type="pathway">
    <text evidence="1">Purine metabolism; AMP biosynthesis via de novo pathway; AMP from IMP: step 1/2.</text>
</comment>
<comment type="subunit">
    <text evidence="1">Homodimer.</text>
</comment>
<comment type="subcellular location">
    <subcellularLocation>
        <location evidence="1">Cytoplasm</location>
    </subcellularLocation>
</comment>
<comment type="similarity">
    <text evidence="1">Belongs to the adenylosuccinate synthetase family.</text>
</comment>
<proteinExistence type="inferred from homology"/>
<dbReference type="EC" id="6.3.4.4" evidence="1"/>
<dbReference type="EMBL" id="CP000577">
    <property type="protein sequence ID" value="ABN77114.1"/>
    <property type="molecule type" value="Genomic_DNA"/>
</dbReference>
<dbReference type="RefSeq" id="WP_011841380.1">
    <property type="nucleotide sequence ID" value="NC_009049.1"/>
</dbReference>
<dbReference type="SMR" id="A3PL98"/>
<dbReference type="KEGG" id="rsh:Rsph17029_2010"/>
<dbReference type="HOGENOM" id="CLU_029848_0_0_5"/>
<dbReference type="UniPathway" id="UPA00075">
    <property type="reaction ID" value="UER00335"/>
</dbReference>
<dbReference type="GO" id="GO:0005737">
    <property type="term" value="C:cytoplasm"/>
    <property type="evidence" value="ECO:0007669"/>
    <property type="project" value="UniProtKB-SubCell"/>
</dbReference>
<dbReference type="GO" id="GO:0004019">
    <property type="term" value="F:adenylosuccinate synthase activity"/>
    <property type="evidence" value="ECO:0007669"/>
    <property type="project" value="UniProtKB-UniRule"/>
</dbReference>
<dbReference type="GO" id="GO:0005525">
    <property type="term" value="F:GTP binding"/>
    <property type="evidence" value="ECO:0007669"/>
    <property type="project" value="UniProtKB-UniRule"/>
</dbReference>
<dbReference type="GO" id="GO:0000287">
    <property type="term" value="F:magnesium ion binding"/>
    <property type="evidence" value="ECO:0007669"/>
    <property type="project" value="UniProtKB-UniRule"/>
</dbReference>
<dbReference type="GO" id="GO:0044208">
    <property type="term" value="P:'de novo' AMP biosynthetic process"/>
    <property type="evidence" value="ECO:0007669"/>
    <property type="project" value="UniProtKB-UniRule"/>
</dbReference>
<dbReference type="GO" id="GO:0046040">
    <property type="term" value="P:IMP metabolic process"/>
    <property type="evidence" value="ECO:0007669"/>
    <property type="project" value="TreeGrafter"/>
</dbReference>
<dbReference type="CDD" id="cd03108">
    <property type="entry name" value="AdSS"/>
    <property type="match status" value="1"/>
</dbReference>
<dbReference type="FunFam" id="1.10.300.10:FF:000001">
    <property type="entry name" value="Adenylosuccinate synthetase"/>
    <property type="match status" value="1"/>
</dbReference>
<dbReference type="FunFam" id="3.90.170.10:FF:000001">
    <property type="entry name" value="Adenylosuccinate synthetase"/>
    <property type="match status" value="1"/>
</dbReference>
<dbReference type="Gene3D" id="3.40.440.10">
    <property type="entry name" value="Adenylosuccinate Synthetase, subunit A, domain 1"/>
    <property type="match status" value="1"/>
</dbReference>
<dbReference type="Gene3D" id="1.10.300.10">
    <property type="entry name" value="Adenylosuccinate Synthetase, subunit A, domain 2"/>
    <property type="match status" value="1"/>
</dbReference>
<dbReference type="Gene3D" id="3.90.170.10">
    <property type="entry name" value="Adenylosuccinate Synthetase, subunit A, domain 3"/>
    <property type="match status" value="1"/>
</dbReference>
<dbReference type="HAMAP" id="MF_00011">
    <property type="entry name" value="Adenylosucc_synth"/>
    <property type="match status" value="1"/>
</dbReference>
<dbReference type="InterPro" id="IPR018220">
    <property type="entry name" value="Adenylosuccin_syn_GTP-bd"/>
</dbReference>
<dbReference type="InterPro" id="IPR033128">
    <property type="entry name" value="Adenylosuccin_syn_Lys_AS"/>
</dbReference>
<dbReference type="InterPro" id="IPR042109">
    <property type="entry name" value="Adenylosuccinate_synth_dom1"/>
</dbReference>
<dbReference type="InterPro" id="IPR042110">
    <property type="entry name" value="Adenylosuccinate_synth_dom2"/>
</dbReference>
<dbReference type="InterPro" id="IPR042111">
    <property type="entry name" value="Adenylosuccinate_synth_dom3"/>
</dbReference>
<dbReference type="InterPro" id="IPR001114">
    <property type="entry name" value="Adenylosuccinate_synthetase"/>
</dbReference>
<dbReference type="InterPro" id="IPR027417">
    <property type="entry name" value="P-loop_NTPase"/>
</dbReference>
<dbReference type="NCBIfam" id="NF002223">
    <property type="entry name" value="PRK01117.1"/>
    <property type="match status" value="1"/>
</dbReference>
<dbReference type="NCBIfam" id="TIGR00184">
    <property type="entry name" value="purA"/>
    <property type="match status" value="1"/>
</dbReference>
<dbReference type="PANTHER" id="PTHR11846">
    <property type="entry name" value="ADENYLOSUCCINATE SYNTHETASE"/>
    <property type="match status" value="1"/>
</dbReference>
<dbReference type="PANTHER" id="PTHR11846:SF0">
    <property type="entry name" value="ADENYLOSUCCINATE SYNTHETASE"/>
    <property type="match status" value="1"/>
</dbReference>
<dbReference type="Pfam" id="PF00709">
    <property type="entry name" value="Adenylsucc_synt"/>
    <property type="match status" value="1"/>
</dbReference>
<dbReference type="SMART" id="SM00788">
    <property type="entry name" value="Adenylsucc_synt"/>
    <property type="match status" value="1"/>
</dbReference>
<dbReference type="SUPFAM" id="SSF52540">
    <property type="entry name" value="P-loop containing nucleoside triphosphate hydrolases"/>
    <property type="match status" value="1"/>
</dbReference>
<dbReference type="PROSITE" id="PS01266">
    <property type="entry name" value="ADENYLOSUCCIN_SYN_1"/>
    <property type="match status" value="1"/>
</dbReference>
<dbReference type="PROSITE" id="PS00513">
    <property type="entry name" value="ADENYLOSUCCIN_SYN_2"/>
    <property type="match status" value="1"/>
</dbReference>
<feature type="chain" id="PRO_1000000909" description="Adenylosuccinate synthetase">
    <location>
        <begin position="1"/>
        <end position="430"/>
    </location>
</feature>
<feature type="active site" description="Proton acceptor" evidence="1">
    <location>
        <position position="13"/>
    </location>
</feature>
<feature type="active site" description="Proton donor" evidence="1">
    <location>
        <position position="41"/>
    </location>
</feature>
<feature type="binding site" evidence="1">
    <location>
        <begin position="12"/>
        <end position="18"/>
    </location>
    <ligand>
        <name>GTP</name>
        <dbReference type="ChEBI" id="CHEBI:37565"/>
    </ligand>
</feature>
<feature type="binding site" description="in other chain" evidence="1">
    <location>
        <begin position="13"/>
        <end position="16"/>
    </location>
    <ligand>
        <name>IMP</name>
        <dbReference type="ChEBI" id="CHEBI:58053"/>
        <note>ligand shared between dimeric partners</note>
    </ligand>
</feature>
<feature type="binding site" evidence="1">
    <location>
        <position position="13"/>
    </location>
    <ligand>
        <name>Mg(2+)</name>
        <dbReference type="ChEBI" id="CHEBI:18420"/>
    </ligand>
</feature>
<feature type="binding site" description="in other chain" evidence="1">
    <location>
        <begin position="38"/>
        <end position="41"/>
    </location>
    <ligand>
        <name>IMP</name>
        <dbReference type="ChEBI" id="CHEBI:58053"/>
        <note>ligand shared between dimeric partners</note>
    </ligand>
</feature>
<feature type="binding site" evidence="1">
    <location>
        <begin position="40"/>
        <end position="42"/>
    </location>
    <ligand>
        <name>GTP</name>
        <dbReference type="ChEBI" id="CHEBI:37565"/>
    </ligand>
</feature>
<feature type="binding site" evidence="1">
    <location>
        <position position="40"/>
    </location>
    <ligand>
        <name>Mg(2+)</name>
        <dbReference type="ChEBI" id="CHEBI:18420"/>
    </ligand>
</feature>
<feature type="binding site" description="in other chain" evidence="1">
    <location>
        <position position="130"/>
    </location>
    <ligand>
        <name>IMP</name>
        <dbReference type="ChEBI" id="CHEBI:58053"/>
        <note>ligand shared between dimeric partners</note>
    </ligand>
</feature>
<feature type="binding site" evidence="1">
    <location>
        <position position="144"/>
    </location>
    <ligand>
        <name>IMP</name>
        <dbReference type="ChEBI" id="CHEBI:58053"/>
        <note>ligand shared between dimeric partners</note>
    </ligand>
</feature>
<feature type="binding site" description="in other chain" evidence="1">
    <location>
        <position position="224"/>
    </location>
    <ligand>
        <name>IMP</name>
        <dbReference type="ChEBI" id="CHEBI:58053"/>
        <note>ligand shared between dimeric partners</note>
    </ligand>
</feature>
<feature type="binding site" description="in other chain" evidence="1">
    <location>
        <position position="239"/>
    </location>
    <ligand>
        <name>IMP</name>
        <dbReference type="ChEBI" id="CHEBI:58053"/>
        <note>ligand shared between dimeric partners</note>
    </ligand>
</feature>
<feature type="binding site" evidence="1">
    <location>
        <begin position="299"/>
        <end position="305"/>
    </location>
    <ligand>
        <name>substrate</name>
    </ligand>
</feature>
<feature type="binding site" description="in other chain" evidence="1">
    <location>
        <position position="303"/>
    </location>
    <ligand>
        <name>IMP</name>
        <dbReference type="ChEBI" id="CHEBI:58053"/>
        <note>ligand shared between dimeric partners</note>
    </ligand>
</feature>
<feature type="binding site" evidence="1">
    <location>
        <position position="305"/>
    </location>
    <ligand>
        <name>GTP</name>
        <dbReference type="ChEBI" id="CHEBI:37565"/>
    </ligand>
</feature>
<feature type="binding site" evidence="1">
    <location>
        <begin position="331"/>
        <end position="333"/>
    </location>
    <ligand>
        <name>GTP</name>
        <dbReference type="ChEBI" id="CHEBI:37565"/>
    </ligand>
</feature>
<feature type="binding site" evidence="1">
    <location>
        <begin position="413"/>
        <end position="415"/>
    </location>
    <ligand>
        <name>GTP</name>
        <dbReference type="ChEBI" id="CHEBI:37565"/>
    </ligand>
</feature>
<organism>
    <name type="scientific">Cereibacter sphaeroides (strain ATCC 17029 / ATH 2.4.9)</name>
    <name type="common">Rhodobacter sphaeroides</name>
    <dbReference type="NCBI Taxonomy" id="349101"/>
    <lineage>
        <taxon>Bacteria</taxon>
        <taxon>Pseudomonadati</taxon>
        <taxon>Pseudomonadota</taxon>
        <taxon>Alphaproteobacteria</taxon>
        <taxon>Rhodobacterales</taxon>
        <taxon>Paracoccaceae</taxon>
        <taxon>Cereibacter</taxon>
    </lineage>
</organism>
<evidence type="ECO:0000255" key="1">
    <source>
        <dbReference type="HAMAP-Rule" id="MF_00011"/>
    </source>
</evidence>
<keyword id="KW-0963">Cytoplasm</keyword>
<keyword id="KW-0342">GTP-binding</keyword>
<keyword id="KW-0436">Ligase</keyword>
<keyword id="KW-0460">Magnesium</keyword>
<keyword id="KW-0479">Metal-binding</keyword>
<keyword id="KW-0547">Nucleotide-binding</keyword>
<keyword id="KW-0658">Purine biosynthesis</keyword>
<gene>
    <name evidence="1" type="primary">purA</name>
    <name type="ordered locus">Rsph17029_2010</name>
</gene>